<organism>
    <name type="scientific">Floropilus chiversii</name>
    <name type="common">Chaetomium chiversii</name>
    <dbReference type="NCBI Taxonomy" id="2587399"/>
    <lineage>
        <taxon>Eukaryota</taxon>
        <taxon>Fungi</taxon>
        <taxon>Dikarya</taxon>
        <taxon>Ascomycota</taxon>
        <taxon>Pezizomycotina</taxon>
        <taxon>Sordariomycetes</taxon>
        <taxon>Sordariomycetidae</taxon>
        <taxon>Sordariales</taxon>
        <taxon>Chaetomiaceae</taxon>
        <taxon>Floropilus</taxon>
    </lineage>
</organism>
<comment type="function">
    <text evidence="3">Efflux pump that might be required for efficient secretion of radicicol or other secondary metabolies produced by the radicicol gene cluster (PubMed:19101477).</text>
</comment>
<comment type="subcellular location">
    <subcellularLocation>
        <location evidence="5">Cell membrane</location>
        <topology evidence="1">Multi-pass membrane protein</topology>
    </subcellularLocation>
</comment>
<comment type="similarity">
    <text evidence="5">Belongs to the major facilitator superfamily.</text>
</comment>
<reference key="1">
    <citation type="journal article" date="2008" name="Chem. Biol.">
        <title>Functional characterization of the biosynthesis of radicicol, an Hsp90 inhibitor resorcylic acid lactone from Chaetomium chiversii.</title>
        <authorList>
            <person name="Wang S."/>
            <person name="Xu Y."/>
            <person name="Maine E.A."/>
            <person name="Wijeratne E.M."/>
            <person name="Espinosa-Artiles P."/>
            <person name="Gunatilaka A.A."/>
            <person name="Molnar I."/>
        </authorList>
    </citation>
    <scope>NUCLEOTIDE SEQUENCE [GENOMIC DNA]</scope>
    <scope>FUNCTION</scope>
    <source>
        <strain>CS-36-62</strain>
    </source>
</reference>
<dbReference type="EMBL" id="EU980390">
    <property type="protein sequence ID" value="ACM42405.1"/>
    <property type="molecule type" value="Genomic_DNA"/>
</dbReference>
<dbReference type="SMR" id="C5H884"/>
<dbReference type="GO" id="GO:0005886">
    <property type="term" value="C:plasma membrane"/>
    <property type="evidence" value="ECO:0007669"/>
    <property type="project" value="UniProtKB-SubCell"/>
</dbReference>
<dbReference type="GO" id="GO:0022857">
    <property type="term" value="F:transmembrane transporter activity"/>
    <property type="evidence" value="ECO:0007669"/>
    <property type="project" value="InterPro"/>
</dbReference>
<dbReference type="CDD" id="cd17323">
    <property type="entry name" value="MFS_Tpo1_MDR_like"/>
    <property type="match status" value="1"/>
</dbReference>
<dbReference type="FunFam" id="1.20.1250.20:FF:000011">
    <property type="entry name" value="MFS multidrug transporter, putative"/>
    <property type="match status" value="1"/>
</dbReference>
<dbReference type="Gene3D" id="1.20.1250.20">
    <property type="entry name" value="MFS general substrate transporter like domains"/>
    <property type="match status" value="1"/>
</dbReference>
<dbReference type="InterPro" id="IPR011701">
    <property type="entry name" value="MFS"/>
</dbReference>
<dbReference type="InterPro" id="IPR020846">
    <property type="entry name" value="MFS_dom"/>
</dbReference>
<dbReference type="InterPro" id="IPR036259">
    <property type="entry name" value="MFS_trans_sf"/>
</dbReference>
<dbReference type="PANTHER" id="PTHR23502">
    <property type="entry name" value="MAJOR FACILITATOR SUPERFAMILY"/>
    <property type="match status" value="1"/>
</dbReference>
<dbReference type="PANTHER" id="PTHR23502:SF68">
    <property type="entry name" value="MULTIDRUG TRANSPORTER, PUTATIVE (AFU_ORTHOLOGUE AFUA_3G01120)-RELATED"/>
    <property type="match status" value="1"/>
</dbReference>
<dbReference type="Pfam" id="PF07690">
    <property type="entry name" value="MFS_1"/>
    <property type="match status" value="1"/>
</dbReference>
<dbReference type="SUPFAM" id="SSF103473">
    <property type="entry name" value="MFS general substrate transporter"/>
    <property type="match status" value="1"/>
</dbReference>
<dbReference type="PROSITE" id="PS50850">
    <property type="entry name" value="MFS"/>
    <property type="match status" value="1"/>
</dbReference>
<protein>
    <recommendedName>
        <fullName evidence="4">Efflux pump radE</fullName>
    </recommendedName>
    <alternativeName>
        <fullName evidence="4">Radicicol biosynthesis cluster protein radE</fullName>
    </alternativeName>
</protein>
<keyword id="KW-1003">Cell membrane</keyword>
<keyword id="KW-0472">Membrane</keyword>
<keyword id="KW-0812">Transmembrane</keyword>
<keyword id="KW-1133">Transmembrane helix</keyword>
<keyword id="KW-0813">Transport</keyword>
<gene>
    <name evidence="4" type="primary">radE</name>
</gene>
<evidence type="ECO:0000255" key="1"/>
<evidence type="ECO:0000256" key="2">
    <source>
        <dbReference type="SAM" id="MobiDB-lite"/>
    </source>
</evidence>
<evidence type="ECO:0000269" key="3">
    <source>
    </source>
</evidence>
<evidence type="ECO:0000303" key="4">
    <source>
    </source>
</evidence>
<evidence type="ECO:0000305" key="5"/>
<proteinExistence type="inferred from homology"/>
<sequence length="538" mass="58448">MATSRDFGREPPRQQQDSDEAGHTLHDGCQHVSEHPQIDVTAHDSSASALPGDETTVGAATAALDPKEEERDPNIVDWDGPDDPANPQNWPPLKKWGNVAVLSIITFMVPLASSMFAPGIPQVLSDFDTNNPSLATFVVSVYILGLAAGPLVLAPMSELYGRVVIYHVGNVLFIIFTVACALSTNMNMLIAFRFLCGLVGAGPIAIGGGTIADLTTLQQRGTAMSVWSLGPLLGPSVGPVAGGFLSQAEGWRWIFWVLAITAGVITIAGLLVLRETHPGTLLERKTRRLRKETGNMNLRSKLDLQVAPRTLFLRSIVRPSKLLVLSPICLVLSVYSAFVYAMIYFMISTFTFVFQDNYGFSEGIVGLVYIALGLGMLFGVVVQQAIGNRIMKRLADKLNKGKPKPEYRIPPTLLAGFLIPTGLFIYGWTVQYHIQWAVPLLGALLAGMGICIINISTNLYLVDAFTLYAASALAASTVLRSIFGATFPLFALQMYETLGLGWGNSLLAFIAVAMFAIPPLLFYYGERLRSHPRFQVKL</sequence>
<accession>C5H884</accession>
<feature type="chain" id="PRO_0000443056" description="Efflux pump radE">
    <location>
        <begin position="1"/>
        <end position="538"/>
    </location>
</feature>
<feature type="transmembrane region" description="Helical" evidence="1">
    <location>
        <begin position="100"/>
        <end position="120"/>
    </location>
</feature>
<feature type="transmembrane region" description="Helical" evidence="1">
    <location>
        <begin position="134"/>
        <end position="154"/>
    </location>
</feature>
<feature type="transmembrane region" description="Helical" evidence="1">
    <location>
        <begin position="163"/>
        <end position="183"/>
    </location>
</feature>
<feature type="transmembrane region" description="Helical" evidence="1">
    <location>
        <begin position="194"/>
        <end position="214"/>
    </location>
</feature>
<feature type="transmembrane region" description="Helical" evidence="1">
    <location>
        <begin position="225"/>
        <end position="245"/>
    </location>
</feature>
<feature type="transmembrane region" description="Helical" evidence="1">
    <location>
        <begin position="253"/>
        <end position="273"/>
    </location>
</feature>
<feature type="transmembrane region" description="Helical" evidence="1">
    <location>
        <begin position="327"/>
        <end position="347"/>
    </location>
</feature>
<feature type="transmembrane region" description="Helical" evidence="1">
    <location>
        <begin position="362"/>
        <end position="382"/>
    </location>
</feature>
<feature type="transmembrane region" description="Helical" evidence="1">
    <location>
        <begin position="409"/>
        <end position="429"/>
    </location>
</feature>
<feature type="transmembrane region" description="Helical" evidence="1">
    <location>
        <begin position="436"/>
        <end position="456"/>
    </location>
</feature>
<feature type="transmembrane region" description="Helical" evidence="1">
    <location>
        <begin position="482"/>
        <end position="502"/>
    </location>
</feature>
<feature type="transmembrane region" description="Helical" evidence="1">
    <location>
        <begin position="505"/>
        <end position="525"/>
    </location>
</feature>
<feature type="region of interest" description="Disordered" evidence="2">
    <location>
        <begin position="1"/>
        <end position="35"/>
    </location>
</feature>
<feature type="region of interest" description="Disordered" evidence="2">
    <location>
        <begin position="65"/>
        <end position="90"/>
    </location>
</feature>
<feature type="compositionally biased region" description="Basic and acidic residues" evidence="2">
    <location>
        <begin position="1"/>
        <end position="12"/>
    </location>
</feature>
<feature type="compositionally biased region" description="Basic and acidic residues" evidence="2">
    <location>
        <begin position="20"/>
        <end position="35"/>
    </location>
</feature>
<feature type="compositionally biased region" description="Basic and acidic residues" evidence="2">
    <location>
        <begin position="65"/>
        <end position="74"/>
    </location>
</feature>
<name>RADE_FLOCH</name>